<comment type="function">
    <text evidence="3 4 5 6 7">Threonine dehydratase-like protein; part of the gene clusters that mediate the biosynthesis of the host-selective toxins (HSTs) AK-toxins responsible for Japanese pear black spot disease by the Japanese pear pathotype (PubMed:24611558). AK-toxins are esters of 9,10-epoxy 8-hydroxy 9-methyldecatrienoic acid (EDA) (PubMed:22846083). On cellular level, AK-toxins affect plasma membrane of susceptible cells and cause a sudden increase in loss of K(+) after a few minutes of toxin treatment (PubMed:22846083). The acyl-CoA ligase AKT1, the hydrolase AKT2 and enoyl-CoA hydratase AKT3 are all involved in the biosynthesis of the AK-, AF- and ACT-toxin common 9,10-epoxy-8-hydroxy-9-methyl-decatrienoic acid (EDA) structural moiety (PubMed:10432635, PubMed:10975654, PubMed:22846083). Part of the EDA biosynthesis occurs in the peroxisome since these 3 enzymes are localized in peroxisomes (PubMed:20348386). The exact roles of the 3 enzymes, as well as of additional AK-toxin clusters enzymes, including AKT4, AKT6 and AKTS1, have still to be elucidated (PubMed:10432635, PubMed:10975654, PubMed:22846083). The Cytochrome P450 monooxygenase AKT7 on the other side functions to limit production of EDA and AK-toxin, probably via the catalysis of a side reaction of EDA or its precursor (PubMed:24611558).</text>
</comment>
<comment type="cofactor">
    <cofactor evidence="1">
        <name>pyridoxal 5'-phosphate</name>
        <dbReference type="ChEBI" id="CHEBI:597326"/>
    </cofactor>
</comment>
<comment type="pathway">
    <text evidence="10">Mycotoxin biosynthesis.</text>
</comment>
<comment type="miscellaneous">
    <text evidence="4">Gene clusters encoding host-selective toxins (HSTs) are localized on conditionally dispensable chromosomes (CDCs), also called supernumerary chromosomes, where they are present in multiple copies (PubMed:10975654). The CDCs are not essential for saprophytic growth but controls host-selective pathogenicity (PubMed:10975654).</text>
</comment>
<comment type="similarity">
    <text evidence="9">Belongs to the serine/threonine dehydratase family.</text>
</comment>
<proteinExistence type="inferred from homology"/>
<name>AKS11_ALTAL</name>
<accession>V5Y0V0</accession>
<keyword id="KW-0456">Lyase</keyword>
<keyword id="KW-0663">Pyridoxal phosphate</keyword>
<keyword id="KW-0843">Virulence</keyword>
<protein>
    <recommendedName>
        <fullName evidence="9">Threonine dehydratase-like protein AKTS1-1</fullName>
        <ecNumber evidence="9">4.3.1.-</ecNumber>
    </recommendedName>
    <alternativeName>
        <fullName evidence="8">AK-toxin biosynthesis protein S1-1</fullName>
    </alternativeName>
</protein>
<evidence type="ECO:0000250" key="1">
    <source>
        <dbReference type="UniProtKB" id="P04968"/>
    </source>
</evidence>
<evidence type="ECO:0000256" key="2">
    <source>
        <dbReference type="SAM" id="MobiDB-lite"/>
    </source>
</evidence>
<evidence type="ECO:0000269" key="3">
    <source>
    </source>
</evidence>
<evidence type="ECO:0000269" key="4">
    <source>
    </source>
</evidence>
<evidence type="ECO:0000269" key="5">
    <source>
    </source>
</evidence>
<evidence type="ECO:0000269" key="6">
    <source>
    </source>
</evidence>
<evidence type="ECO:0000303" key="7">
    <source>
    </source>
</evidence>
<evidence type="ECO:0000303" key="8">
    <source>
    </source>
</evidence>
<evidence type="ECO:0000305" key="9"/>
<evidence type="ECO:0000305" key="10">
    <source>
    </source>
</evidence>
<organism>
    <name type="scientific">Alternaria alternata</name>
    <name type="common">Alternaria rot fungus</name>
    <name type="synonym">Torula alternata</name>
    <dbReference type="NCBI Taxonomy" id="5599"/>
    <lineage>
        <taxon>Eukaryota</taxon>
        <taxon>Fungi</taxon>
        <taxon>Dikarya</taxon>
        <taxon>Ascomycota</taxon>
        <taxon>Pezizomycotina</taxon>
        <taxon>Dothideomycetes</taxon>
        <taxon>Pleosporomycetidae</taxon>
        <taxon>Pleosporales</taxon>
        <taxon>Pleosporineae</taxon>
        <taxon>Pleosporaceae</taxon>
        <taxon>Alternaria</taxon>
        <taxon>Alternaria sect. Alternaria</taxon>
        <taxon>Alternaria alternata complex</taxon>
    </lineage>
</organism>
<feature type="chain" id="PRO_0000444861" description="Threonine dehydratase-like protein AKTS1-1">
    <location>
        <begin position="1"/>
        <end position="409"/>
    </location>
</feature>
<feature type="region of interest" description="Disordered" evidence="2">
    <location>
        <begin position="1"/>
        <end position="21"/>
    </location>
</feature>
<feature type="binding site" evidence="1">
    <location>
        <position position="138"/>
    </location>
    <ligand>
        <name>pyridoxal 5'-phosphate</name>
        <dbReference type="ChEBI" id="CHEBI:597326"/>
    </ligand>
</feature>
<feature type="binding site" evidence="1">
    <location>
        <begin position="239"/>
        <end position="243"/>
    </location>
    <ligand>
        <name>pyridoxal 5'-phosphate</name>
        <dbReference type="ChEBI" id="CHEBI:597326"/>
    </ligand>
</feature>
<feature type="binding site" evidence="1">
    <location>
        <position position="368"/>
    </location>
    <ligand>
        <name>pyridoxal 5'-phosphate</name>
        <dbReference type="ChEBI" id="CHEBI:597326"/>
    </ligand>
</feature>
<feature type="modified residue" description="N6-(pyridoxal phosphate)lysine" evidence="1">
    <location>
        <position position="111"/>
    </location>
</feature>
<reference key="1">
    <citation type="submission" date="2013-11" db="EMBL/GenBank/DDBJ databases">
        <title>The gene cluster involved in AK-toxin biosynthesis of Alternaria alternata.</title>
        <authorList>
            <person name="Mase R."/>
            <person name="Tanaka A."/>
            <person name="Harimoto Y."/>
            <person name="Tsuge T."/>
        </authorList>
    </citation>
    <scope>NUCLEOTIDE SEQUENCE [GENOMIC DNA]</scope>
    <source>
        <strain>15A</strain>
    </source>
</reference>
<reference key="2">
    <citation type="journal article" date="1999" name="Mol. Plant Microbe Interact.">
        <title>Insertional mutagenesis and cloning of the genes required for biosynthesis of the host-specific AK-toxin in the Japanese pear pathotype of Alternaria alternata.</title>
        <authorList>
            <person name="Tanaka A."/>
            <person name="Shiotani H."/>
            <person name="Yamamoto M."/>
            <person name="Tsuge T."/>
        </authorList>
    </citation>
    <scope>FUNCTION</scope>
    <source>
        <strain>15A</strain>
    </source>
</reference>
<reference key="3">
    <citation type="journal article" date="2000" name="Mol. Plant Microbe Interact.">
        <title>Structural and functional complexity of the genomic region controlling AK-toxin biosynthesis and pathogenicity in the Japanese pear pathotype of Alternaria alternata.</title>
        <authorList>
            <person name="Tanaka A."/>
            <person name="Tsuge T."/>
        </authorList>
    </citation>
    <scope>FUNCTION</scope>
</reference>
<reference key="4">
    <citation type="journal article" date="2010" name="Eukaryot. Cell">
        <title>Contribution of peroxisomes to secondary metabolism and pathogenicity in the fungal plant pathogen Alternaria alternata.</title>
        <authorList>
            <person name="Imazaki A."/>
            <person name="Tanaka A."/>
            <person name="Harimoto Y."/>
            <person name="Yamamoto M."/>
            <person name="Akimitsu K."/>
            <person name="Park P."/>
            <person name="Tsuge T."/>
        </authorList>
    </citation>
    <scope>FUNCTION</scope>
</reference>
<reference key="5">
    <citation type="journal article" date="2013" name="FEMS Microbiol. Rev.">
        <title>Host-selective toxins produced by the plant pathogenic fungus Alternaria alternata.</title>
        <authorList>
            <person name="Tsuge T."/>
            <person name="Harimoto Y."/>
            <person name="Akimitsu K."/>
            <person name="Ohtani K."/>
            <person name="Kodama M."/>
            <person name="Akagi Y."/>
            <person name="Egusa M."/>
            <person name="Yamamoto M."/>
            <person name="Otani H."/>
        </authorList>
    </citation>
    <scope>REVIEW ON HOST-SELECTIVE TOXINS</scope>
</reference>
<reference key="6">
    <citation type="journal article" date="2014" name="New Phytol.">
        <title>Complex regulation of secondary metabolism controlling pathogenicity in the phytopathogenic fungus Alternaria alternata.</title>
        <authorList>
            <person name="Takaoka S."/>
            <person name="Kurata M."/>
            <person name="Harimoto Y."/>
            <person name="Hatta R."/>
            <person name="Yamamoto M."/>
            <person name="Akimitsu K."/>
            <person name="Tsuge T."/>
        </authorList>
    </citation>
    <scope>FUNCTION</scope>
    <scope>PATHWAY</scope>
    <source>
        <strain>15A</strain>
    </source>
</reference>
<sequence length="409" mass="44959">MADYLRQVMPENDSDSEALPRKSEQASLAWAEYTANFEMGLESSKLKNNKNMPEAFLLPNGYPDYLRLILTSRVYDVVTETPLTPVVNISNRLGCKVLLKREDLQPVFSFKLRGAYNKMAHLDPRDCWRGVVTYSTGNHAQGVAYSARKLRIPATIVMPSGTPDIMHMNVSRLGGSVILHGADLDTAKAEAERLEKIYNLISIPPLDDPYVIAGHGTIGMELLHQISSKNLEAVFCCAGEGSLIAGIGIYLKRIAPHVNIIGVEMHNPKATVKSLEGVKYTTLKDAGLFARCATVKTAGRESYRIFQEVVSEVIEVTMDETFGATKDIFEDTRAIIEPAGALVLAGLKKWVSQNPSVNQDRCLVAIASGANVDFDHLRLITERASIAENKGGLHEINGVSRNEEPYLLS</sequence>
<dbReference type="EC" id="4.3.1.-" evidence="9"/>
<dbReference type="EMBL" id="AB872926">
    <property type="protein sequence ID" value="BAO10624.1"/>
    <property type="molecule type" value="Genomic_DNA"/>
</dbReference>
<dbReference type="SMR" id="V5Y0V0"/>
<dbReference type="VEuPathDB" id="FungiDB:CC77DRAFT_1015234"/>
<dbReference type="GO" id="GO:0003941">
    <property type="term" value="F:L-serine ammonia-lyase activity"/>
    <property type="evidence" value="ECO:0007669"/>
    <property type="project" value="TreeGrafter"/>
</dbReference>
<dbReference type="GO" id="GO:0030170">
    <property type="term" value="F:pyridoxal phosphate binding"/>
    <property type="evidence" value="ECO:0007669"/>
    <property type="project" value="InterPro"/>
</dbReference>
<dbReference type="GO" id="GO:0004794">
    <property type="term" value="F:threonine deaminase activity"/>
    <property type="evidence" value="ECO:0007669"/>
    <property type="project" value="TreeGrafter"/>
</dbReference>
<dbReference type="GO" id="GO:0009097">
    <property type="term" value="P:isoleucine biosynthetic process"/>
    <property type="evidence" value="ECO:0007669"/>
    <property type="project" value="TreeGrafter"/>
</dbReference>
<dbReference type="GO" id="GO:0006565">
    <property type="term" value="P:L-serine catabolic process"/>
    <property type="evidence" value="ECO:0007669"/>
    <property type="project" value="TreeGrafter"/>
</dbReference>
<dbReference type="GO" id="GO:0006567">
    <property type="term" value="P:threonine catabolic process"/>
    <property type="evidence" value="ECO:0007669"/>
    <property type="project" value="TreeGrafter"/>
</dbReference>
<dbReference type="CDD" id="cd01562">
    <property type="entry name" value="Thr-dehyd"/>
    <property type="match status" value="1"/>
</dbReference>
<dbReference type="FunFam" id="3.40.50.1100:FF:000005">
    <property type="entry name" value="Threonine dehydratase catabolic"/>
    <property type="match status" value="1"/>
</dbReference>
<dbReference type="Gene3D" id="3.40.50.1100">
    <property type="match status" value="2"/>
</dbReference>
<dbReference type="InterPro" id="IPR050147">
    <property type="entry name" value="Ser/Thr_Dehydratase"/>
</dbReference>
<dbReference type="InterPro" id="IPR000634">
    <property type="entry name" value="Ser/Thr_deHydtase_PyrdxlP-BS"/>
</dbReference>
<dbReference type="InterPro" id="IPR001926">
    <property type="entry name" value="TrpB-like_PALP"/>
</dbReference>
<dbReference type="InterPro" id="IPR036052">
    <property type="entry name" value="TrpB-like_PALP_sf"/>
</dbReference>
<dbReference type="PANTHER" id="PTHR48078:SF11">
    <property type="entry name" value="THREONINE DEHYDRATASE, MITOCHONDRIAL"/>
    <property type="match status" value="1"/>
</dbReference>
<dbReference type="PANTHER" id="PTHR48078">
    <property type="entry name" value="THREONINE DEHYDRATASE, MITOCHONDRIAL-RELATED"/>
    <property type="match status" value="1"/>
</dbReference>
<dbReference type="Pfam" id="PF00291">
    <property type="entry name" value="PALP"/>
    <property type="match status" value="1"/>
</dbReference>
<dbReference type="SUPFAM" id="SSF53686">
    <property type="entry name" value="Tryptophan synthase beta subunit-like PLP-dependent enzymes"/>
    <property type="match status" value="1"/>
</dbReference>
<dbReference type="PROSITE" id="PS00165">
    <property type="entry name" value="DEHYDRATASE_SER_THR"/>
    <property type="match status" value="1"/>
</dbReference>
<gene>
    <name evidence="8" type="primary">AKTS1-1</name>
</gene>